<protein>
    <recommendedName>
        <fullName>Histone H4</fullName>
    </recommendedName>
</protein>
<gene>
    <name type="primary">H4-I</name>
</gene>
<gene>
    <name type="primary">H4-II</name>
</gene>
<gene>
    <name type="primary">H4-III</name>
</gene>
<gene>
    <name type="primary">H4-IV</name>
</gene>
<gene>
    <name type="primary">H4-V</name>
</gene>
<gene>
    <name type="primary">H4-VI</name>
</gene>
<gene>
    <name type="primary">H4-VII</name>
</gene>
<organism>
    <name type="scientific">Gallus gallus</name>
    <name type="common">Chicken</name>
    <dbReference type="NCBI Taxonomy" id="9031"/>
    <lineage>
        <taxon>Eukaryota</taxon>
        <taxon>Metazoa</taxon>
        <taxon>Chordata</taxon>
        <taxon>Craniata</taxon>
        <taxon>Vertebrata</taxon>
        <taxon>Euteleostomi</taxon>
        <taxon>Archelosauria</taxon>
        <taxon>Archosauria</taxon>
        <taxon>Dinosauria</taxon>
        <taxon>Saurischia</taxon>
        <taxon>Theropoda</taxon>
        <taxon>Coelurosauria</taxon>
        <taxon>Aves</taxon>
        <taxon>Neognathae</taxon>
        <taxon>Galloanserae</taxon>
        <taxon>Galliformes</taxon>
        <taxon>Phasianidae</taxon>
        <taxon>Phasianinae</taxon>
        <taxon>Gallus</taxon>
    </lineage>
</organism>
<comment type="function">
    <text>Core component of nucleosome. Nucleosomes wrap and compact DNA into chromatin, limiting DNA accessibility to the cellular machineries which require DNA as a template. Histones thereby play a central role in transcription regulation, DNA repair, DNA replication and chromosomal stability. DNA accessibility is regulated via a complex set of post-translational modifications of histones, also called histone code, and nucleosome remodeling.</text>
</comment>
<comment type="subunit">
    <text>The nucleosome is a histone octamer containing two molecules each of H2A, H2B, H3 and H4 assembled in one H3-H4 heterotetramer and two H2A-H2B heterodimers. The octamer wraps approximately 147 bp of DNA.</text>
</comment>
<comment type="subcellular location">
    <subcellularLocation>
        <location>Nucleus</location>
    </subcellularLocation>
    <subcellularLocation>
        <location>Chromosome</location>
    </subcellularLocation>
</comment>
<comment type="PTM">
    <text evidence="2">Acetylation at Lys-6 (H4K5ac), Lys-9 (H4K8ac), Lys-13 (H4K12ac) and Lys-17 (H4K16ac) occurs in coding regions of the genome but not in heterochromatin.</text>
</comment>
<comment type="PTM">
    <text evidence="2">Citrullination at Arg-4 (H4R3ci) by PADI4 impairs methylation.</text>
</comment>
<comment type="PTM">
    <text evidence="2">Monomethylation and asymmetric dimethylation at Arg-4 (H4R3me1 and H4R3me2a, respectively) by PRMT1 favors acetylation at Lys-9 (H4K8ac) and Lys-13 (H4K12ac). Demethylation is performed by JMJD6. Symmetric dimethylation on Arg-4 (H4R3me2s) by the PRDM1/PRMT5 complex may play a crucial role in the germ-cell lineage (By similarity).</text>
</comment>
<comment type="PTM">
    <text evidence="2">Monomethylated, dimethylated or trimethylated at Lys-21 (H4K20me1, H4K20me2, H4K20me3). Monomethylation is performed by KMT5A/SET8. Trimethylation is performed by KMT5B and KMT5C and induces gene silencing. Monomethylated at Lys-13 (H4K12me1) by N6AMT1; H4K12me1 modification is present at the promoters of numerous genes encoding cell cycle regulators.</text>
</comment>
<comment type="PTM">
    <text evidence="2">Acetyl-methylated at Lys-6 and Lys-13 (H4K5acme and H4K12acme, respectively), acetyl-methylation is an epigenetic mark of active chromatin associated with increased transcriptional initiation. Acetyl-methylation is formed by acetylation by EP300/p300 of lysine residues that are already monomethylated on the same side chain. H4K5acme and H4K12acme marks specifically bind BRD2.</text>
</comment>
<comment type="PTM">
    <text evidence="2">Phosphorylated by PAK2 at Ser-48 (H4S47ph). This phosphorylation increases the association of H3.3-H4 with the histone chaperone HIRA, thus promoting nucleosome assembly of H3.3-H4 and inhibiting nucleosome assembly of H3.1-H4 (By similarity).</text>
</comment>
<comment type="PTM">
    <text evidence="2">Ubiquitinated by the CUL4-DDB-RBX1 complex in response to ultraviolet irradiation. This may weaken the interaction between histones and DNA and facilitate DNA accessibility to repair proteins. Monoubiquitinated at Lys-92 of histone H4 (H4K91ub1) in response to DNA damage. The exact role of H4K91ub1 in DNA damage response is still unclear but it may function as a licensing signal for additional histone H4 post-translational modifications such as H4 Lys-21 methylation (H4K20me) (By similarity).</text>
</comment>
<comment type="PTM">
    <text evidence="2">Sumoylated, which is associated with transcriptional repression.</text>
</comment>
<comment type="PTM">
    <text evidence="3">Butyrylation of histones marks active promoters and competes with histone acetylation.</text>
</comment>
<comment type="PTM">
    <text evidence="2">Glutarylation at Lys-92 (H4K91glu) destabilizes nucleosomes by promoting dissociation of the H2A-H2B dimers from nucleosomes.</text>
</comment>
<comment type="PTM">
    <text evidence="2">Ufmylated; monofmylated by UFL1 at Lys-32 (H4K31Ufm1) in response to DNA damage.</text>
</comment>
<comment type="PTM">
    <text evidence="2">Lactylated in macrophages by EP300/P300 by using lactoyl-CoA directly derived from endogenous or exogenous lactate, leading to stimulates gene transcription. Delactylated by SIRT3 at Lys-17 (H4K16la).</text>
</comment>
<comment type="similarity">
    <text evidence="5">Belongs to the histone H4 family.</text>
</comment>
<keyword id="KW-0002">3D-structure</keyword>
<keyword id="KW-0007">Acetylation</keyword>
<keyword id="KW-0158">Chromosome</keyword>
<keyword id="KW-0164">Citrullination</keyword>
<keyword id="KW-0238">DNA-binding</keyword>
<keyword id="KW-0379">Hydroxylation</keyword>
<keyword id="KW-1017">Isopeptide bond</keyword>
<keyword id="KW-0488">Methylation</keyword>
<keyword id="KW-0544">Nucleosome core</keyword>
<keyword id="KW-0539">Nucleus</keyword>
<keyword id="KW-0597">Phosphoprotein</keyword>
<keyword id="KW-1185">Reference proteome</keyword>
<keyword id="KW-0832">Ubl conjugation</keyword>
<reference key="1">
    <citation type="journal article" date="1985" name="Nucleic Acids Res.">
        <title>Inverted duplication of histone genes in chicken and disposition of regulatory sequences.</title>
        <authorList>
            <person name="Wang S.W."/>
            <person name="Robins A.J."/>
            <person name="D'Andrea R."/>
            <person name="Wells J.R.E."/>
        </authorList>
    </citation>
    <scope>NUCLEOTIDE SEQUENCE [GENOMIC DNA]</scope>
</reference>
<reference key="2">
    <citation type="journal article" date="1983" name="J. Biol. Chem.">
        <title>Genomic organization, DNA sequence, and expression of chicken embryonic histone genes.</title>
        <authorList>
            <person name="Sugarman B.J."/>
            <person name="Dodgson J.B."/>
            <person name="Engel J.D."/>
        </authorList>
    </citation>
    <scope>NUCLEOTIDE SEQUENCE [GENOMIC DNA]</scope>
</reference>
<reference key="3">
    <citation type="journal article" date="1991" name="Gene">
        <title>Nucleotide sequences of two members of the chicken H4 histone-encoding gene family.</title>
        <authorList>
            <person name="Nakayama T."/>
            <person name="Takechi S."/>
            <person name="Ohshige T."/>
            <person name="Kondo K."/>
            <person name="Yamamoto K."/>
        </authorList>
    </citation>
    <scope>NUCLEOTIDE SEQUENCE [GENOMIC DNA] (H4-III AND H4-IV)</scope>
</reference>
<reference key="4">
    <citation type="journal article" date="1996" name="DNA Res.">
        <title>Organization of the chicken histone genes in a major gene cluster and generation of an almost complete set of the core histone protein sequences.</title>
        <authorList>
            <person name="Takami Y."/>
            <person name="Higashio M."/>
            <person name="Fukuoka T."/>
            <person name="Takechi S."/>
            <person name="Nakayama T."/>
        </authorList>
    </citation>
    <scope>NUCLEOTIDE SEQUENCE [GENOMIC DNA] (H4-VI AND H4-VII)</scope>
    <source>
        <strain>White leghorn</strain>
        <tissue>Liver</tissue>
    </source>
</reference>
<reference key="5">
    <citation type="journal article" date="1991" name="Proc. Natl. Acad. Sci. U.S.A.">
        <title>The nucleosomal core histone octamer at 3.1 A resolution: a tripartite protein assembly and a left-handed superhelix.</title>
        <authorList>
            <person name="Arents G."/>
            <person name="Burlingame R.W."/>
            <person name="Wang B.-C."/>
            <person name="Love W.E."/>
            <person name="Moudrianakis E.N."/>
        </authorList>
    </citation>
    <scope>X-RAY CRYSTALLOGRAPHY (3.1 ANGSTROMS)</scope>
</reference>
<reference key="6">
    <citation type="journal article" date="2000" name="Acta Crystallogr. D">
        <title>Asymmetries in the nucleosome core particle at 2.5 A resolution.</title>
        <authorList>
            <person name="Harp J.M."/>
            <person name="Hanson B.L."/>
            <person name="Timm D.E."/>
            <person name="Bunick G.J."/>
        </authorList>
    </citation>
    <scope>X-RAY CRYSTALLOGRAPHY (2.5 ANGSTROMS)</scope>
</reference>
<name>H4_CHICK</name>
<proteinExistence type="evidence at protein level"/>
<feature type="initiator methionine" description="Removed" evidence="1">
    <location>
        <position position="1"/>
    </location>
</feature>
<feature type="chain" id="PRO_0000158296" description="Histone H4">
    <location>
        <begin position="2"/>
        <end position="103"/>
    </location>
</feature>
<feature type="DNA-binding region">
    <location>
        <begin position="17"/>
        <end position="21"/>
    </location>
</feature>
<feature type="region of interest" description="Disordered" evidence="4">
    <location>
        <begin position="1"/>
        <end position="20"/>
    </location>
</feature>
<feature type="compositionally biased region" description="Gly residues" evidence="4">
    <location>
        <begin position="1"/>
        <end position="14"/>
    </location>
</feature>
<feature type="modified residue" description="N-acetylserine" evidence="2">
    <location>
        <position position="2"/>
    </location>
</feature>
<feature type="modified residue" description="Phosphoserine" evidence="2">
    <location>
        <position position="2"/>
    </location>
</feature>
<feature type="modified residue" description="Asymmetric dimethylarginine; by PRMT1; alternate" evidence="2">
    <location>
        <position position="4"/>
    </location>
</feature>
<feature type="modified residue" description="Citrulline; alternate" evidence="2">
    <location>
        <position position="4"/>
    </location>
</feature>
<feature type="modified residue" description="Omega-N-methylarginine; by PRMT1; alternate" evidence="2">
    <location>
        <position position="4"/>
    </location>
</feature>
<feature type="modified residue" description="Symmetric dimethylarginine; by PRMT5 and PRMT7; alternate" evidence="2">
    <location>
        <position position="4"/>
    </location>
</feature>
<feature type="modified residue" description="N6-(2-hydroxyisobutyryl)lysine; alternate" evidence="2">
    <location>
        <position position="6"/>
    </location>
</feature>
<feature type="modified residue" description="N6-acetyl-N6-methyllysine; alternate" evidence="2">
    <location>
        <position position="6"/>
    </location>
</feature>
<feature type="modified residue" description="N6-acetyllysine" evidence="2">
    <location>
        <position position="6"/>
    </location>
</feature>
<feature type="modified residue" description="N6-butyryllysine; alternate" evidence="2">
    <location>
        <position position="6"/>
    </location>
</feature>
<feature type="modified residue" description="N6-glutaryllysine; alternate" evidence="2">
    <location>
        <position position="6"/>
    </location>
</feature>
<feature type="modified residue" description="N6-lactoyllysine; alternate" evidence="2">
    <location>
        <position position="6"/>
    </location>
</feature>
<feature type="modified residue" description="N6-(2-hydroxyisobutyryl)lysine; alternate" evidence="2">
    <location>
        <position position="9"/>
    </location>
</feature>
<feature type="modified residue" description="N6-acetyllysine" evidence="2">
    <location>
        <position position="9"/>
    </location>
</feature>
<feature type="modified residue" description="N6-butyryllysine; alternate" evidence="2">
    <location>
        <position position="9"/>
    </location>
</feature>
<feature type="modified residue" description="N6-lactoyllysine; alternate" evidence="2">
    <location>
        <position position="9"/>
    </location>
</feature>
<feature type="modified residue" description="N6-propionyllysine; alternate" evidence="2">
    <location>
        <position position="9"/>
    </location>
</feature>
<feature type="modified residue" description="N6-(2-hydroxyisobutyryl)lysine; alternate" evidence="2">
    <location>
        <position position="13"/>
    </location>
</feature>
<feature type="modified residue" description="N6-acetyl-N6-methyllysine; alternate" evidence="2">
    <location>
        <position position="13"/>
    </location>
</feature>
<feature type="modified residue" description="N6-acetyllysine" evidence="2">
    <location>
        <position position="13"/>
    </location>
</feature>
<feature type="modified residue" description="N6-butyryllysine; alternate" evidence="2">
    <location>
        <position position="13"/>
    </location>
</feature>
<feature type="modified residue" description="N6-glutaryllysine; alternate" evidence="2">
    <location>
        <position position="13"/>
    </location>
</feature>
<feature type="modified residue" description="N6-lactoyllysine; alternate" evidence="2">
    <location>
        <position position="13"/>
    </location>
</feature>
<feature type="modified residue" description="N6-methyllysine; alternate" evidence="2">
    <location>
        <position position="13"/>
    </location>
</feature>
<feature type="modified residue" description="N6-(2-hydroxyisobutyryl)lysine; alternate" evidence="2">
    <location>
        <position position="17"/>
    </location>
</feature>
<feature type="modified residue" description="N6-acetyllysine" evidence="2">
    <location>
        <position position="17"/>
    </location>
</feature>
<feature type="modified residue" description="N6-butyryllysine; alternate" evidence="2">
    <location>
        <position position="17"/>
    </location>
</feature>
<feature type="modified residue" description="N6-lactoyllysine; alternate" evidence="2">
    <location>
        <position position="17"/>
    </location>
</feature>
<feature type="modified residue" description="N6-propionyllysine; alternate" evidence="2">
    <location>
        <position position="17"/>
    </location>
</feature>
<feature type="modified residue" description="N6,N6,N6-trimethyllysine; alternate" evidence="2">
    <location>
        <position position="21"/>
    </location>
</feature>
<feature type="modified residue" description="N6,N6-dimethyllysine; alternate" evidence="2">
    <location>
        <position position="21"/>
    </location>
</feature>
<feature type="modified residue" description="N6-methylated lysine" evidence="2">
    <location>
        <position position="21"/>
    </location>
</feature>
<feature type="modified residue" description="N6-methyllysine; alternate" evidence="2">
    <location>
        <position position="21"/>
    </location>
</feature>
<feature type="modified residue" description="N6-(2-hydroxyisobutyryl)lysine; alternate" evidence="2">
    <location>
        <position position="32"/>
    </location>
</feature>
<feature type="modified residue" description="N6-acetyllysine" evidence="2">
    <location>
        <position position="32"/>
    </location>
</feature>
<feature type="modified residue" description="N6-butyryllysine; alternate" evidence="2">
    <location>
        <position position="32"/>
    </location>
</feature>
<feature type="modified residue" description="N6-glutaryllysine; alternate" evidence="2">
    <location>
        <position position="32"/>
    </location>
</feature>
<feature type="modified residue" description="N6-lactoyllysine; alternate" evidence="2">
    <location>
        <position position="32"/>
    </location>
</feature>
<feature type="modified residue" description="N6-propionyllysine; alternate" evidence="2">
    <location>
        <position position="32"/>
    </location>
</feature>
<feature type="modified residue" description="N6-succinyllysine; alternate" evidence="2">
    <location>
        <position position="32"/>
    </location>
</feature>
<feature type="modified residue" description="N6-(2-hydroxyisobutyryl)lysine; alternate" evidence="2">
    <location>
        <position position="45"/>
    </location>
</feature>
<feature type="modified residue" description="N6-butyryllysine; alternate" evidence="2">
    <location>
        <position position="45"/>
    </location>
</feature>
<feature type="modified residue" description="N6-propionyllysine; alternate" evidence="2">
    <location>
        <position position="45"/>
    </location>
</feature>
<feature type="modified residue" description="Phosphoserine; by PAK2" evidence="2">
    <location>
        <position position="48"/>
    </location>
</feature>
<feature type="modified residue" description="Phosphotyrosine" evidence="2">
    <location>
        <position position="52"/>
    </location>
</feature>
<feature type="modified residue" description="N6-(2-hydroxyisobutyryl)lysine" evidence="2">
    <location>
        <position position="60"/>
    </location>
</feature>
<feature type="modified residue" description="N6-acetyllysine" evidence="2">
    <location>
        <position position="60"/>
    </location>
</feature>
<feature type="modified residue" description="N6-glutaryllysine; alternate" evidence="2">
    <location>
        <position position="60"/>
    </location>
</feature>
<feature type="modified residue" description="N6-(2-hydroxyisobutyryl)lysine; alternate" evidence="2">
    <location>
        <position position="78"/>
    </location>
</feature>
<feature type="modified residue" description="N6-butyryllysine; alternate" evidence="2">
    <location>
        <position position="78"/>
    </location>
</feature>
<feature type="modified residue" description="N6-glutaryllysine; alternate" evidence="2">
    <location>
        <position position="78"/>
    </location>
</feature>
<feature type="modified residue" description="N6-lactoyllysine; alternate" evidence="2">
    <location>
        <position position="78"/>
    </location>
</feature>
<feature type="modified residue" description="N6-propionyllysine; alternate" evidence="2">
    <location>
        <position position="78"/>
    </location>
</feature>
<feature type="modified residue" description="N6-succinyllysine" evidence="2">
    <location>
        <position position="78"/>
    </location>
</feature>
<feature type="modified residue" description="N6-(2-hydroxyisobutyryl)lysine; alternate" evidence="2">
    <location>
        <position position="80"/>
    </location>
</feature>
<feature type="modified residue" description="N6-acetyllysine" evidence="2">
    <location>
        <position position="80"/>
    </location>
</feature>
<feature type="modified residue" description="N6-butyryllysine; alternate" evidence="2">
    <location>
        <position position="80"/>
    </location>
</feature>
<feature type="modified residue" description="N6-glutaryllysine; alternate" evidence="2">
    <location>
        <position position="80"/>
    </location>
</feature>
<feature type="modified residue" description="N6-propionyllysine; alternate" evidence="2">
    <location>
        <position position="80"/>
    </location>
</feature>
<feature type="modified residue" description="Phosphotyrosine" evidence="2">
    <location>
        <position position="89"/>
    </location>
</feature>
<feature type="modified residue" description="N6-(2-hydroxyisobutyryl)lysine; alternate" evidence="2">
    <location>
        <position position="92"/>
    </location>
</feature>
<feature type="modified residue" description="N6-acetyllysine; alternate" evidence="2">
    <location>
        <position position="92"/>
    </location>
</feature>
<feature type="modified residue" description="N6-butyryllysine; alternate" evidence="2">
    <location>
        <position position="92"/>
    </location>
</feature>
<feature type="modified residue" description="N6-glutaryllysine; alternate" evidence="2">
    <location>
        <position position="92"/>
    </location>
</feature>
<feature type="modified residue" description="N6-lactoyllysine; alternate" evidence="2">
    <location>
        <position position="92"/>
    </location>
</feature>
<feature type="modified residue" description="N6-propionyllysine; alternate" evidence="2">
    <location>
        <position position="92"/>
    </location>
</feature>
<feature type="modified residue" description="N6-succinyllysine; alternate" evidence="2">
    <location>
        <position position="92"/>
    </location>
</feature>
<feature type="cross-link" description="Glycyl lysine isopeptide (Lys-Gly) (interchain with G-Cter in UFM1); alternate" evidence="2">
    <location>
        <position position="32"/>
    </location>
</feature>
<feature type="cross-link" description="Glycyl lysine isopeptide (Lys-Gly) (interchain with G-Cter in ubiquitin); alternate" evidence="2">
    <location>
        <position position="92"/>
    </location>
</feature>
<feature type="helix" evidence="6">
    <location>
        <begin position="26"/>
        <end position="29"/>
    </location>
</feature>
<feature type="helix" evidence="6">
    <location>
        <begin position="32"/>
        <end position="41"/>
    </location>
</feature>
<feature type="helix" evidence="6">
    <location>
        <begin position="51"/>
        <end position="76"/>
    </location>
</feature>
<feature type="strand" evidence="6">
    <location>
        <begin position="80"/>
        <end position="82"/>
    </location>
</feature>
<feature type="helix" evidence="6">
    <location>
        <begin position="84"/>
        <end position="93"/>
    </location>
</feature>
<feature type="strand" evidence="6">
    <location>
        <begin position="97"/>
        <end position="100"/>
    </location>
</feature>
<accession>P62801</accession>
<accession>P02304</accession>
<accession>P02305</accession>
<dbReference type="EMBL" id="X02218">
    <property type="protein sequence ID" value="CAA26137.1"/>
    <property type="molecule type" value="Genomic_DNA"/>
</dbReference>
<dbReference type="EMBL" id="X02218">
    <property type="protein sequence ID" value="CAA26140.1"/>
    <property type="molecule type" value="Genomic_DNA"/>
</dbReference>
<dbReference type="EMBL" id="J00866">
    <property type="status" value="NOT_ANNOTATED_CDS"/>
    <property type="molecule type" value="Genomic_DNA"/>
</dbReference>
<dbReference type="EMBL" id="M74533">
    <property type="protein sequence ID" value="AAA73091.1"/>
    <property type="molecule type" value="Genomic_DNA"/>
</dbReference>
<dbReference type="EMBL" id="M74534">
    <property type="protein sequence ID" value="AAA73092.1"/>
    <property type="molecule type" value="Genomic_DNA"/>
</dbReference>
<dbReference type="EMBL" id="U37575">
    <property type="protein sequence ID" value="AAC59999.1"/>
    <property type="molecule type" value="Genomic_DNA"/>
</dbReference>
<dbReference type="EMBL" id="U37575">
    <property type="protein sequence ID" value="AAC60001.1"/>
    <property type="molecule type" value="Genomic_DNA"/>
</dbReference>
<dbReference type="PIR" id="A02640">
    <property type="entry name" value="HSCH4"/>
</dbReference>
<dbReference type="PIR" id="JH0507">
    <property type="entry name" value="JH0507"/>
</dbReference>
<dbReference type="RefSeq" id="NP_001032932.1">
    <property type="nucleotide sequence ID" value="NM_001037843.1"/>
</dbReference>
<dbReference type="RefSeq" id="NP_001268414.1">
    <property type="nucleotide sequence ID" value="NM_001281485.1"/>
</dbReference>
<dbReference type="RefSeq" id="XP_004937726.1">
    <property type="nucleotide sequence ID" value="XM_004937669.2"/>
</dbReference>
<dbReference type="PDB" id="1EQZ">
    <property type="method" value="X-ray"/>
    <property type="resolution" value="2.50 A"/>
    <property type="chains" value="D/H=1-103"/>
</dbReference>
<dbReference type="PDB" id="1HIO">
    <property type="method" value="X-ray"/>
    <property type="resolution" value="3.10 A"/>
    <property type="chains" value="D=28-103"/>
</dbReference>
<dbReference type="PDB" id="1HQ3">
    <property type="method" value="X-ray"/>
    <property type="resolution" value="2.15 A"/>
    <property type="chains" value="D/H=1-103"/>
</dbReference>
<dbReference type="PDB" id="1TZY">
    <property type="method" value="X-ray"/>
    <property type="resolution" value="1.90 A"/>
    <property type="chains" value="D/H=1-103"/>
</dbReference>
<dbReference type="PDB" id="2ARO">
    <property type="method" value="X-ray"/>
    <property type="resolution" value="2.10 A"/>
    <property type="chains" value="D/H=1-103"/>
</dbReference>
<dbReference type="PDB" id="2HIO">
    <property type="method" value="X-ray"/>
    <property type="resolution" value="3.10 A"/>
    <property type="chains" value="D=1-103"/>
</dbReference>
<dbReference type="PDB" id="3C9K">
    <property type="method" value="EM"/>
    <property type="resolution" value="20.00 A"/>
    <property type="chains" value="D/H=2-103"/>
</dbReference>
<dbReference type="PDBsum" id="1EQZ"/>
<dbReference type="PDBsum" id="1HIO"/>
<dbReference type="PDBsum" id="1HQ3"/>
<dbReference type="PDBsum" id="1TZY"/>
<dbReference type="PDBsum" id="2ARO"/>
<dbReference type="PDBsum" id="2HIO"/>
<dbReference type="PDBsum" id="3C9K"/>
<dbReference type="EMDB" id="EMD-0323"/>
<dbReference type="EMDB" id="EMD-1469"/>
<dbReference type="SMR" id="P62801"/>
<dbReference type="BioGRID" id="679227">
    <property type="interactions" value="7"/>
</dbReference>
<dbReference type="FunCoup" id="P62801">
    <property type="interactions" value="2024"/>
</dbReference>
<dbReference type="IntAct" id="P62801">
    <property type="interactions" value="2"/>
</dbReference>
<dbReference type="STRING" id="9031.ENSGALP00000049875"/>
<dbReference type="PaxDb" id="9031-ENSGALP00000041526"/>
<dbReference type="GeneID" id="100858049"/>
<dbReference type="GeneID" id="417950"/>
<dbReference type="GeneID" id="427884"/>
<dbReference type="KEGG" id="gga:100858049"/>
<dbReference type="KEGG" id="gga:100858319"/>
<dbReference type="KEGG" id="gga:417946"/>
<dbReference type="KEGG" id="gga:417950"/>
<dbReference type="KEGG" id="gga:427884"/>
<dbReference type="KEGG" id="gga:770005"/>
<dbReference type="KEGG" id="gga:770142"/>
<dbReference type="CTD" id="100858049"/>
<dbReference type="CTD" id="100858319"/>
<dbReference type="CTD" id="417946"/>
<dbReference type="CTD" id="417950"/>
<dbReference type="CTD" id="427884"/>
<dbReference type="CTD" id="770142"/>
<dbReference type="VEuPathDB" id="HostDB:geneid_100858049"/>
<dbReference type="VEuPathDB" id="HostDB:geneid_100858319"/>
<dbReference type="VEuPathDB" id="HostDB:geneid_417946"/>
<dbReference type="VEuPathDB" id="HostDB:geneid_417950"/>
<dbReference type="VEuPathDB" id="HostDB:geneid_427884"/>
<dbReference type="VEuPathDB" id="HostDB:geneid_770005"/>
<dbReference type="VEuPathDB" id="HostDB:geneid_770142"/>
<dbReference type="VEuPathDB" id="HostDB:LOC121106538"/>
<dbReference type="eggNOG" id="KOG3467">
    <property type="taxonomic scope" value="Eukaryota"/>
</dbReference>
<dbReference type="HOGENOM" id="CLU_109117_2_3_1"/>
<dbReference type="InParanoid" id="P62801"/>
<dbReference type="OMA" id="XRISAMI"/>
<dbReference type="OrthoDB" id="9115449at2759"/>
<dbReference type="PhylomeDB" id="P62801"/>
<dbReference type="Reactome" id="R-GGA-201722">
    <property type="pathway name" value="Formation of the beta-catenin:TCF transactivating complex"/>
</dbReference>
<dbReference type="Reactome" id="R-GGA-212300">
    <property type="pathway name" value="PRC2 methylates histones and DNA"/>
</dbReference>
<dbReference type="Reactome" id="R-GGA-2299718">
    <property type="pathway name" value="Condensation of Prophase Chromosomes"/>
</dbReference>
<dbReference type="Reactome" id="R-GGA-2559580">
    <property type="pathway name" value="Oxidative Stress Induced Senescence"/>
</dbReference>
<dbReference type="Reactome" id="R-GGA-3214815">
    <property type="pathway name" value="HDACs deacetylate histones"/>
</dbReference>
<dbReference type="Reactome" id="R-GGA-3214841">
    <property type="pathway name" value="PKMTs methylate histone lysines"/>
</dbReference>
<dbReference type="Reactome" id="R-GGA-3214842">
    <property type="pathway name" value="HDMs demethylate histones"/>
</dbReference>
<dbReference type="Reactome" id="R-GGA-3214847">
    <property type="pathway name" value="HATs acetylate histones"/>
</dbReference>
<dbReference type="Reactome" id="R-GGA-3214858">
    <property type="pathway name" value="RMTs methylate histone arginines"/>
</dbReference>
<dbReference type="Reactome" id="R-GGA-4551638">
    <property type="pathway name" value="SUMOylation of chromatin organization proteins"/>
</dbReference>
<dbReference type="Reactome" id="R-GGA-5250924">
    <property type="pathway name" value="B-WICH complex positively regulates rRNA expression"/>
</dbReference>
<dbReference type="Reactome" id="R-GGA-5578749">
    <property type="pathway name" value="Transcriptional regulation by small RNAs"/>
</dbReference>
<dbReference type="Reactome" id="R-GGA-5625886">
    <property type="pathway name" value="Activated PKN1 stimulates transcription of AR (androgen receptor) regulated genes KLK2 and KLK3"/>
</dbReference>
<dbReference type="Reactome" id="R-GGA-5693565">
    <property type="pathway name" value="Recruitment and ATM-mediated phosphorylation of repair and signaling proteins at DNA double strand breaks"/>
</dbReference>
<dbReference type="Reactome" id="R-GGA-5693571">
    <property type="pathway name" value="Nonhomologous End-Joining (NHEJ)"/>
</dbReference>
<dbReference type="Reactome" id="R-GGA-5693607">
    <property type="pathway name" value="Processing of DNA double-strand break ends"/>
</dbReference>
<dbReference type="Reactome" id="R-GGA-606279">
    <property type="pathway name" value="Deposition of new CENPA-containing nucleosomes at the centromere"/>
</dbReference>
<dbReference type="Reactome" id="R-GGA-68616">
    <property type="pathway name" value="Assembly of the ORC complex at the origin of replication"/>
</dbReference>
<dbReference type="Reactome" id="R-GGA-69473">
    <property type="pathway name" value="G2/M DNA damage checkpoint"/>
</dbReference>
<dbReference type="Reactome" id="R-GGA-73728">
    <property type="pathway name" value="RNA Polymerase I Promoter Opening"/>
</dbReference>
<dbReference type="Reactome" id="R-GGA-73772">
    <property type="pathway name" value="RNA Polymerase I Promoter Escape"/>
</dbReference>
<dbReference type="Reactome" id="R-GGA-8936459">
    <property type="pathway name" value="RUNX1 regulates genes involved in megakaryocyte differentiation and platelet function"/>
</dbReference>
<dbReference type="Reactome" id="R-GGA-9018519">
    <property type="pathway name" value="Estrogen-dependent gene expression"/>
</dbReference>
<dbReference type="Reactome" id="R-GGA-9841922">
    <property type="pathway name" value="MLL4 and MLL3 complexes regulate expression of PPARG target genes in adipogenesis and hepatic steatosis"/>
</dbReference>
<dbReference type="Reactome" id="R-GGA-9843940">
    <property type="pathway name" value="Regulation of endogenous retroelements by KRAB-ZFP proteins"/>
</dbReference>
<dbReference type="Reactome" id="R-GGA-9843970">
    <property type="pathway name" value="Regulation of endogenous retroelements by the Human Silencing Hub (HUSH) complex"/>
</dbReference>
<dbReference type="EvolutionaryTrace" id="P62801"/>
<dbReference type="PRO" id="PR:P62801"/>
<dbReference type="Proteomes" id="UP000000539">
    <property type="component" value="Chromosome 1"/>
</dbReference>
<dbReference type="Bgee" id="ENSGALG00000037322">
    <property type="expression patterns" value="Expressed in granulocyte and 14 other cell types or tissues"/>
</dbReference>
<dbReference type="GO" id="GO:0005654">
    <property type="term" value="C:nucleoplasm"/>
    <property type="evidence" value="ECO:0000304"/>
    <property type="project" value="Reactome"/>
</dbReference>
<dbReference type="GO" id="GO:0000786">
    <property type="term" value="C:nucleosome"/>
    <property type="evidence" value="ECO:0007669"/>
    <property type="project" value="UniProtKB-KW"/>
</dbReference>
<dbReference type="GO" id="GO:0003677">
    <property type="term" value="F:DNA binding"/>
    <property type="evidence" value="ECO:0000318"/>
    <property type="project" value="GO_Central"/>
</dbReference>
<dbReference type="GO" id="GO:0046982">
    <property type="term" value="F:protein heterodimerization activity"/>
    <property type="evidence" value="ECO:0007669"/>
    <property type="project" value="InterPro"/>
</dbReference>
<dbReference type="GO" id="GO:0030527">
    <property type="term" value="F:structural constituent of chromatin"/>
    <property type="evidence" value="ECO:0007669"/>
    <property type="project" value="InterPro"/>
</dbReference>
<dbReference type="GO" id="GO:0006334">
    <property type="term" value="P:nucleosome assembly"/>
    <property type="evidence" value="ECO:0000318"/>
    <property type="project" value="GO_Central"/>
</dbReference>
<dbReference type="CDD" id="cd22912">
    <property type="entry name" value="HFD_H4"/>
    <property type="match status" value="1"/>
</dbReference>
<dbReference type="FunFam" id="1.10.20.10:FF:000002">
    <property type="entry name" value="Histone H4"/>
    <property type="match status" value="1"/>
</dbReference>
<dbReference type="Gene3D" id="1.10.20.10">
    <property type="entry name" value="Histone, subunit A"/>
    <property type="match status" value="1"/>
</dbReference>
<dbReference type="InterPro" id="IPR035425">
    <property type="entry name" value="CENP-T/H4_C"/>
</dbReference>
<dbReference type="InterPro" id="IPR009072">
    <property type="entry name" value="Histone-fold"/>
</dbReference>
<dbReference type="InterPro" id="IPR001951">
    <property type="entry name" value="Histone_H4"/>
</dbReference>
<dbReference type="InterPro" id="IPR019809">
    <property type="entry name" value="Histone_H4_CS"/>
</dbReference>
<dbReference type="InterPro" id="IPR004823">
    <property type="entry name" value="TAF_TATA-bd_Histone-like_dom"/>
</dbReference>
<dbReference type="PANTHER" id="PTHR10484">
    <property type="entry name" value="HISTONE H4"/>
    <property type="match status" value="1"/>
</dbReference>
<dbReference type="Pfam" id="PF15511">
    <property type="entry name" value="CENP-T_C"/>
    <property type="match status" value="1"/>
</dbReference>
<dbReference type="PRINTS" id="PR00623">
    <property type="entry name" value="HISTONEH4"/>
</dbReference>
<dbReference type="SMART" id="SM00417">
    <property type="entry name" value="H4"/>
    <property type="match status" value="1"/>
</dbReference>
<dbReference type="SMART" id="SM00803">
    <property type="entry name" value="TAF"/>
    <property type="match status" value="1"/>
</dbReference>
<dbReference type="SUPFAM" id="SSF47113">
    <property type="entry name" value="Histone-fold"/>
    <property type="match status" value="1"/>
</dbReference>
<dbReference type="PROSITE" id="PS00047">
    <property type="entry name" value="HISTONE_H4"/>
    <property type="match status" value="1"/>
</dbReference>
<sequence length="103" mass="11367">MSGRGKGGKGLGKGGAKRHRKVLRDNIQGITKPAIRRLARRGGVKRISGLIYEETRGVLKVFLENVIRDAVTYTEHAKRKTVTAMDVVYALKRQGRTLYGFGG</sequence>
<evidence type="ECO:0000250" key="1"/>
<evidence type="ECO:0000250" key="2">
    <source>
        <dbReference type="UniProtKB" id="P62805"/>
    </source>
</evidence>
<evidence type="ECO:0000250" key="3">
    <source>
        <dbReference type="UniProtKB" id="P62806"/>
    </source>
</evidence>
<evidence type="ECO:0000256" key="4">
    <source>
        <dbReference type="SAM" id="MobiDB-lite"/>
    </source>
</evidence>
<evidence type="ECO:0000305" key="5"/>
<evidence type="ECO:0007829" key="6">
    <source>
        <dbReference type="PDB" id="1TZY"/>
    </source>
</evidence>